<feature type="chain" id="PRO_0000278052" description="Inner membrane-spanning protein YciB">
    <location>
        <begin position="1"/>
        <end position="180"/>
    </location>
</feature>
<feature type="transmembrane region" description="Helical" evidence="1">
    <location>
        <begin position="4"/>
        <end position="24"/>
    </location>
</feature>
<feature type="transmembrane region" description="Helical" evidence="1">
    <location>
        <begin position="25"/>
        <end position="45"/>
    </location>
</feature>
<feature type="transmembrane region" description="Helical" evidence="1">
    <location>
        <begin position="49"/>
        <end position="69"/>
    </location>
</feature>
<feature type="transmembrane region" description="Helical" evidence="1">
    <location>
        <begin position="76"/>
        <end position="96"/>
    </location>
</feature>
<feature type="transmembrane region" description="Helical" evidence="1">
    <location>
        <begin position="118"/>
        <end position="138"/>
    </location>
</feature>
<feature type="transmembrane region" description="Helical" evidence="1">
    <location>
        <begin position="150"/>
        <end position="170"/>
    </location>
</feature>
<accession>Q68WY5</accession>
<gene>
    <name evidence="1" type="primary">yciB</name>
    <name type="ordered locus">RT0380</name>
</gene>
<comment type="function">
    <text evidence="1">Plays a role in cell envelope biogenesis, maintenance of cell envelope integrity and membrane homeostasis.</text>
</comment>
<comment type="subcellular location">
    <subcellularLocation>
        <location evidence="1">Cell inner membrane</location>
        <topology evidence="1">Multi-pass membrane protein</topology>
    </subcellularLocation>
</comment>
<comment type="similarity">
    <text evidence="1">Belongs to the YciB family.</text>
</comment>
<evidence type="ECO:0000255" key="1">
    <source>
        <dbReference type="HAMAP-Rule" id="MF_00189"/>
    </source>
</evidence>
<reference key="1">
    <citation type="journal article" date="2004" name="J. Bacteriol.">
        <title>Complete genome sequence of Rickettsia typhi and comparison with sequences of other Rickettsiae.</title>
        <authorList>
            <person name="McLeod M.P."/>
            <person name="Qin X."/>
            <person name="Karpathy S.E."/>
            <person name="Gioia J."/>
            <person name="Highlander S.K."/>
            <person name="Fox G.E."/>
            <person name="McNeill T.Z."/>
            <person name="Jiang H."/>
            <person name="Muzny D."/>
            <person name="Jacob L.S."/>
            <person name="Hawes A.C."/>
            <person name="Sodergren E."/>
            <person name="Gill R."/>
            <person name="Hume J."/>
            <person name="Morgan M."/>
            <person name="Fan G."/>
            <person name="Amin A.G."/>
            <person name="Gibbs R.A."/>
            <person name="Hong C."/>
            <person name="Yu X.-J."/>
            <person name="Walker D.H."/>
            <person name="Weinstock G.M."/>
        </authorList>
    </citation>
    <scope>NUCLEOTIDE SEQUENCE [LARGE SCALE GENOMIC DNA]</scope>
    <source>
        <strain>ATCC VR-144 / Wilmington</strain>
    </source>
</reference>
<sequence length="180" mass="20464">MLKLLSEIGPVIAFFAGFFYGGGIQSATLYMLITSIICITLCYIIDKKVSKLSIISSTVLFVSGIITLISGDSMYIKIKPTILYVIFGIIFLMSGIRKNPFIKYALESIVRLKEESWIILSYRTAAFFFFMAVVNEVVWRNFSDETWVKFKVFGVIPITFIFILLQLPLLLKNKLPDSKI</sequence>
<protein>
    <recommendedName>
        <fullName evidence="1">Inner membrane-spanning protein YciB</fullName>
    </recommendedName>
</protein>
<name>YCIB_RICTY</name>
<dbReference type="EMBL" id="AE017197">
    <property type="protein sequence ID" value="AAU03857.1"/>
    <property type="molecule type" value="Genomic_DNA"/>
</dbReference>
<dbReference type="RefSeq" id="WP_011190841.1">
    <property type="nucleotide sequence ID" value="NC_006142.1"/>
</dbReference>
<dbReference type="SMR" id="Q68WY5"/>
<dbReference type="KEGG" id="rty:RT0380"/>
<dbReference type="eggNOG" id="COG2917">
    <property type="taxonomic scope" value="Bacteria"/>
</dbReference>
<dbReference type="HOGENOM" id="CLU_089554_1_1_5"/>
<dbReference type="OrthoDB" id="9788219at2"/>
<dbReference type="Proteomes" id="UP000000604">
    <property type="component" value="Chromosome"/>
</dbReference>
<dbReference type="GO" id="GO:0005886">
    <property type="term" value="C:plasma membrane"/>
    <property type="evidence" value="ECO:0007669"/>
    <property type="project" value="UniProtKB-SubCell"/>
</dbReference>
<dbReference type="HAMAP" id="MF_00189">
    <property type="entry name" value="YciB"/>
    <property type="match status" value="1"/>
</dbReference>
<dbReference type="InterPro" id="IPR006008">
    <property type="entry name" value="YciB"/>
</dbReference>
<dbReference type="NCBIfam" id="TIGR00997">
    <property type="entry name" value="ispZ"/>
    <property type="match status" value="1"/>
</dbReference>
<dbReference type="NCBIfam" id="NF001323">
    <property type="entry name" value="PRK00259.1-1"/>
    <property type="match status" value="1"/>
</dbReference>
<dbReference type="PANTHER" id="PTHR36917:SF1">
    <property type="entry name" value="INNER MEMBRANE-SPANNING PROTEIN YCIB"/>
    <property type="match status" value="1"/>
</dbReference>
<dbReference type="PANTHER" id="PTHR36917">
    <property type="entry name" value="INTRACELLULAR SEPTATION PROTEIN A-RELATED"/>
    <property type="match status" value="1"/>
</dbReference>
<dbReference type="Pfam" id="PF04279">
    <property type="entry name" value="IspA"/>
    <property type="match status" value="1"/>
</dbReference>
<organism>
    <name type="scientific">Rickettsia typhi (strain ATCC VR-144 / Wilmington)</name>
    <dbReference type="NCBI Taxonomy" id="257363"/>
    <lineage>
        <taxon>Bacteria</taxon>
        <taxon>Pseudomonadati</taxon>
        <taxon>Pseudomonadota</taxon>
        <taxon>Alphaproteobacteria</taxon>
        <taxon>Rickettsiales</taxon>
        <taxon>Rickettsiaceae</taxon>
        <taxon>Rickettsieae</taxon>
        <taxon>Rickettsia</taxon>
        <taxon>typhus group</taxon>
    </lineage>
</organism>
<proteinExistence type="inferred from homology"/>
<keyword id="KW-0997">Cell inner membrane</keyword>
<keyword id="KW-1003">Cell membrane</keyword>
<keyword id="KW-0472">Membrane</keyword>
<keyword id="KW-0812">Transmembrane</keyword>
<keyword id="KW-1133">Transmembrane helix</keyword>